<name>RS5_PSEPF</name>
<gene>
    <name evidence="1" type="primary">rpsE</name>
    <name type="ordered locus">Pfl01_5062</name>
</gene>
<proteinExistence type="inferred from homology"/>
<protein>
    <recommendedName>
        <fullName evidence="1">Small ribosomal subunit protein uS5</fullName>
    </recommendedName>
    <alternativeName>
        <fullName evidence="2">30S ribosomal protein S5</fullName>
    </alternativeName>
</protein>
<dbReference type="EMBL" id="CP000094">
    <property type="protein sequence ID" value="ABA76799.1"/>
    <property type="molecule type" value="Genomic_DNA"/>
</dbReference>
<dbReference type="RefSeq" id="WP_007955637.1">
    <property type="nucleotide sequence ID" value="NC_007492.2"/>
</dbReference>
<dbReference type="SMR" id="Q3K605"/>
<dbReference type="GeneID" id="89625322"/>
<dbReference type="KEGG" id="pfo:Pfl01_5062"/>
<dbReference type="eggNOG" id="COG0098">
    <property type="taxonomic scope" value="Bacteria"/>
</dbReference>
<dbReference type="HOGENOM" id="CLU_065898_2_2_6"/>
<dbReference type="Proteomes" id="UP000002704">
    <property type="component" value="Chromosome"/>
</dbReference>
<dbReference type="GO" id="GO:0015935">
    <property type="term" value="C:small ribosomal subunit"/>
    <property type="evidence" value="ECO:0007669"/>
    <property type="project" value="InterPro"/>
</dbReference>
<dbReference type="GO" id="GO:0019843">
    <property type="term" value="F:rRNA binding"/>
    <property type="evidence" value="ECO:0007669"/>
    <property type="project" value="UniProtKB-UniRule"/>
</dbReference>
<dbReference type="GO" id="GO:0003735">
    <property type="term" value="F:structural constituent of ribosome"/>
    <property type="evidence" value="ECO:0007669"/>
    <property type="project" value="InterPro"/>
</dbReference>
<dbReference type="GO" id="GO:0006412">
    <property type="term" value="P:translation"/>
    <property type="evidence" value="ECO:0007669"/>
    <property type="project" value="UniProtKB-UniRule"/>
</dbReference>
<dbReference type="FunFam" id="3.30.160.20:FF:000001">
    <property type="entry name" value="30S ribosomal protein S5"/>
    <property type="match status" value="1"/>
</dbReference>
<dbReference type="FunFam" id="3.30.230.10:FF:000002">
    <property type="entry name" value="30S ribosomal protein S5"/>
    <property type="match status" value="1"/>
</dbReference>
<dbReference type="Gene3D" id="3.30.160.20">
    <property type="match status" value="1"/>
</dbReference>
<dbReference type="Gene3D" id="3.30.230.10">
    <property type="match status" value="1"/>
</dbReference>
<dbReference type="HAMAP" id="MF_01307_B">
    <property type="entry name" value="Ribosomal_uS5_B"/>
    <property type="match status" value="1"/>
</dbReference>
<dbReference type="InterPro" id="IPR020568">
    <property type="entry name" value="Ribosomal_Su5_D2-typ_SF"/>
</dbReference>
<dbReference type="InterPro" id="IPR000851">
    <property type="entry name" value="Ribosomal_uS5"/>
</dbReference>
<dbReference type="InterPro" id="IPR005712">
    <property type="entry name" value="Ribosomal_uS5_bac-type"/>
</dbReference>
<dbReference type="InterPro" id="IPR005324">
    <property type="entry name" value="Ribosomal_uS5_C"/>
</dbReference>
<dbReference type="InterPro" id="IPR013810">
    <property type="entry name" value="Ribosomal_uS5_N"/>
</dbReference>
<dbReference type="InterPro" id="IPR018192">
    <property type="entry name" value="Ribosomal_uS5_N_CS"/>
</dbReference>
<dbReference type="InterPro" id="IPR014721">
    <property type="entry name" value="Ribsml_uS5_D2-typ_fold_subgr"/>
</dbReference>
<dbReference type="NCBIfam" id="TIGR01021">
    <property type="entry name" value="rpsE_bact"/>
    <property type="match status" value="1"/>
</dbReference>
<dbReference type="PANTHER" id="PTHR48432">
    <property type="entry name" value="S5 DRBM DOMAIN-CONTAINING PROTEIN"/>
    <property type="match status" value="1"/>
</dbReference>
<dbReference type="PANTHER" id="PTHR48432:SF1">
    <property type="entry name" value="S5 DRBM DOMAIN-CONTAINING PROTEIN"/>
    <property type="match status" value="1"/>
</dbReference>
<dbReference type="Pfam" id="PF00333">
    <property type="entry name" value="Ribosomal_S5"/>
    <property type="match status" value="1"/>
</dbReference>
<dbReference type="Pfam" id="PF03719">
    <property type="entry name" value="Ribosomal_S5_C"/>
    <property type="match status" value="1"/>
</dbReference>
<dbReference type="SUPFAM" id="SSF54768">
    <property type="entry name" value="dsRNA-binding domain-like"/>
    <property type="match status" value="1"/>
</dbReference>
<dbReference type="SUPFAM" id="SSF54211">
    <property type="entry name" value="Ribosomal protein S5 domain 2-like"/>
    <property type="match status" value="1"/>
</dbReference>
<dbReference type="PROSITE" id="PS00585">
    <property type="entry name" value="RIBOSOMAL_S5"/>
    <property type="match status" value="1"/>
</dbReference>
<dbReference type="PROSITE" id="PS50881">
    <property type="entry name" value="S5_DSRBD"/>
    <property type="match status" value="1"/>
</dbReference>
<accession>Q3K605</accession>
<sequence length="166" mass="17724">MSNNDQKRDEGYIEKLVQVNRVAKTVKGGRIFTFTALTVVGDGKGRVGFGRGKSREVPAAIQKAMEAARRNMIQVDLNGTTLQYAMKSAHGASKVYMQPASEGTGIIAGGAMRAVLEVAGVQNVLAKCYGSTNPVNVVHATFKGLKAMQSPESIAAKRGLRVEEIK</sequence>
<keyword id="KW-0687">Ribonucleoprotein</keyword>
<keyword id="KW-0689">Ribosomal protein</keyword>
<keyword id="KW-0694">RNA-binding</keyword>
<keyword id="KW-0699">rRNA-binding</keyword>
<feature type="chain" id="PRO_0000230361" description="Small ribosomal subunit protein uS5">
    <location>
        <begin position="1"/>
        <end position="166"/>
    </location>
</feature>
<feature type="domain" description="S5 DRBM" evidence="1">
    <location>
        <begin position="12"/>
        <end position="75"/>
    </location>
</feature>
<organism>
    <name type="scientific">Pseudomonas fluorescens (strain Pf0-1)</name>
    <dbReference type="NCBI Taxonomy" id="205922"/>
    <lineage>
        <taxon>Bacteria</taxon>
        <taxon>Pseudomonadati</taxon>
        <taxon>Pseudomonadota</taxon>
        <taxon>Gammaproteobacteria</taxon>
        <taxon>Pseudomonadales</taxon>
        <taxon>Pseudomonadaceae</taxon>
        <taxon>Pseudomonas</taxon>
    </lineage>
</organism>
<reference key="1">
    <citation type="journal article" date="2009" name="Genome Biol.">
        <title>Genomic and genetic analyses of diversity and plant interactions of Pseudomonas fluorescens.</title>
        <authorList>
            <person name="Silby M.W."/>
            <person name="Cerdeno-Tarraga A.M."/>
            <person name="Vernikos G.S."/>
            <person name="Giddens S.R."/>
            <person name="Jackson R.W."/>
            <person name="Preston G.M."/>
            <person name="Zhang X.-X."/>
            <person name="Moon C.D."/>
            <person name="Gehrig S.M."/>
            <person name="Godfrey S.A.C."/>
            <person name="Knight C.G."/>
            <person name="Malone J.G."/>
            <person name="Robinson Z."/>
            <person name="Spiers A.J."/>
            <person name="Harris S."/>
            <person name="Challis G.L."/>
            <person name="Yaxley A.M."/>
            <person name="Harris D."/>
            <person name="Seeger K."/>
            <person name="Murphy L."/>
            <person name="Rutter S."/>
            <person name="Squares R."/>
            <person name="Quail M.A."/>
            <person name="Saunders E."/>
            <person name="Mavromatis K."/>
            <person name="Brettin T.S."/>
            <person name="Bentley S.D."/>
            <person name="Hothersall J."/>
            <person name="Stephens E."/>
            <person name="Thomas C.M."/>
            <person name="Parkhill J."/>
            <person name="Levy S.B."/>
            <person name="Rainey P.B."/>
            <person name="Thomson N.R."/>
        </authorList>
    </citation>
    <scope>NUCLEOTIDE SEQUENCE [LARGE SCALE GENOMIC DNA]</scope>
    <source>
        <strain>Pf0-1</strain>
    </source>
</reference>
<comment type="function">
    <text evidence="1">With S4 and S12 plays an important role in translational accuracy.</text>
</comment>
<comment type="function">
    <text evidence="1">Located at the back of the 30S subunit body where it stabilizes the conformation of the head with respect to the body.</text>
</comment>
<comment type="subunit">
    <text evidence="1">Part of the 30S ribosomal subunit. Contacts proteins S4 and S8.</text>
</comment>
<comment type="domain">
    <text>The N-terminal domain interacts with the head of the 30S subunit; the C-terminal domain interacts with the body and contacts protein S4. The interaction surface between S4 and S5 is involved in control of translational fidelity.</text>
</comment>
<comment type="similarity">
    <text evidence="1">Belongs to the universal ribosomal protein uS5 family.</text>
</comment>
<evidence type="ECO:0000255" key="1">
    <source>
        <dbReference type="HAMAP-Rule" id="MF_01307"/>
    </source>
</evidence>
<evidence type="ECO:0000305" key="2"/>